<name>ILVD_SALPK</name>
<feature type="chain" id="PRO_1000089411" description="Dihydroxy-acid dehydratase">
    <location>
        <begin position="1"/>
        <end position="616"/>
    </location>
</feature>
<feature type="active site" description="Proton acceptor" evidence="1">
    <location>
        <position position="517"/>
    </location>
</feature>
<feature type="binding site" evidence="1">
    <location>
        <position position="81"/>
    </location>
    <ligand>
        <name>Mg(2+)</name>
        <dbReference type="ChEBI" id="CHEBI:18420"/>
    </ligand>
</feature>
<feature type="binding site" evidence="1">
    <location>
        <position position="122"/>
    </location>
    <ligand>
        <name>[2Fe-2S] cluster</name>
        <dbReference type="ChEBI" id="CHEBI:190135"/>
    </ligand>
</feature>
<feature type="binding site" evidence="1">
    <location>
        <position position="123"/>
    </location>
    <ligand>
        <name>Mg(2+)</name>
        <dbReference type="ChEBI" id="CHEBI:18420"/>
    </ligand>
</feature>
<feature type="binding site" description="via carbamate group" evidence="1">
    <location>
        <position position="124"/>
    </location>
    <ligand>
        <name>Mg(2+)</name>
        <dbReference type="ChEBI" id="CHEBI:18420"/>
    </ligand>
</feature>
<feature type="binding site" evidence="1">
    <location>
        <position position="195"/>
    </location>
    <ligand>
        <name>[2Fe-2S] cluster</name>
        <dbReference type="ChEBI" id="CHEBI:190135"/>
    </ligand>
</feature>
<feature type="binding site" evidence="1">
    <location>
        <position position="491"/>
    </location>
    <ligand>
        <name>Mg(2+)</name>
        <dbReference type="ChEBI" id="CHEBI:18420"/>
    </ligand>
</feature>
<feature type="modified residue" description="N6-carboxylysine" evidence="1">
    <location>
        <position position="124"/>
    </location>
</feature>
<keyword id="KW-0001">2Fe-2S</keyword>
<keyword id="KW-0028">Amino-acid biosynthesis</keyword>
<keyword id="KW-0100">Branched-chain amino acid biosynthesis</keyword>
<keyword id="KW-0408">Iron</keyword>
<keyword id="KW-0411">Iron-sulfur</keyword>
<keyword id="KW-0456">Lyase</keyword>
<keyword id="KW-0460">Magnesium</keyword>
<keyword id="KW-0479">Metal-binding</keyword>
<proteinExistence type="inferred from homology"/>
<gene>
    <name evidence="1" type="primary">ilvD</name>
    <name type="ordered locus">SSPA3488</name>
</gene>
<dbReference type="EC" id="4.2.1.9" evidence="1"/>
<dbReference type="EMBL" id="FM200053">
    <property type="protein sequence ID" value="CAR61765.1"/>
    <property type="molecule type" value="Genomic_DNA"/>
</dbReference>
<dbReference type="RefSeq" id="WP_001127439.1">
    <property type="nucleotide sequence ID" value="NC_011147.1"/>
</dbReference>
<dbReference type="SMR" id="B5BIR7"/>
<dbReference type="KEGG" id="sek:SSPA3488"/>
<dbReference type="HOGENOM" id="CLU_014271_4_2_6"/>
<dbReference type="UniPathway" id="UPA00047">
    <property type="reaction ID" value="UER00057"/>
</dbReference>
<dbReference type="UniPathway" id="UPA00049">
    <property type="reaction ID" value="UER00061"/>
</dbReference>
<dbReference type="Proteomes" id="UP000001869">
    <property type="component" value="Chromosome"/>
</dbReference>
<dbReference type="GO" id="GO:0005829">
    <property type="term" value="C:cytosol"/>
    <property type="evidence" value="ECO:0007669"/>
    <property type="project" value="TreeGrafter"/>
</dbReference>
<dbReference type="GO" id="GO:0051537">
    <property type="term" value="F:2 iron, 2 sulfur cluster binding"/>
    <property type="evidence" value="ECO:0007669"/>
    <property type="project" value="UniProtKB-UniRule"/>
</dbReference>
<dbReference type="GO" id="GO:0004160">
    <property type="term" value="F:dihydroxy-acid dehydratase activity"/>
    <property type="evidence" value="ECO:0007669"/>
    <property type="project" value="UniProtKB-UniRule"/>
</dbReference>
<dbReference type="GO" id="GO:0000287">
    <property type="term" value="F:magnesium ion binding"/>
    <property type="evidence" value="ECO:0007669"/>
    <property type="project" value="UniProtKB-UniRule"/>
</dbReference>
<dbReference type="GO" id="GO:0009097">
    <property type="term" value="P:isoleucine biosynthetic process"/>
    <property type="evidence" value="ECO:0007669"/>
    <property type="project" value="UniProtKB-UniRule"/>
</dbReference>
<dbReference type="GO" id="GO:0009099">
    <property type="term" value="P:L-valine biosynthetic process"/>
    <property type="evidence" value="ECO:0007669"/>
    <property type="project" value="UniProtKB-UniRule"/>
</dbReference>
<dbReference type="FunFam" id="3.50.30.80:FF:000001">
    <property type="entry name" value="Dihydroxy-acid dehydratase"/>
    <property type="match status" value="1"/>
</dbReference>
<dbReference type="Gene3D" id="3.50.30.80">
    <property type="entry name" value="IlvD/EDD C-terminal domain-like"/>
    <property type="match status" value="1"/>
</dbReference>
<dbReference type="HAMAP" id="MF_00012">
    <property type="entry name" value="IlvD"/>
    <property type="match status" value="1"/>
</dbReference>
<dbReference type="InterPro" id="IPR042096">
    <property type="entry name" value="Dihydro-acid_dehy_C"/>
</dbReference>
<dbReference type="InterPro" id="IPR004404">
    <property type="entry name" value="DihydroxyA_deHydtase"/>
</dbReference>
<dbReference type="InterPro" id="IPR020558">
    <property type="entry name" value="DiOHA_6PGluconate_deHydtase_CS"/>
</dbReference>
<dbReference type="InterPro" id="IPR056740">
    <property type="entry name" value="ILV_EDD_C"/>
</dbReference>
<dbReference type="InterPro" id="IPR000581">
    <property type="entry name" value="ILV_EDD_N"/>
</dbReference>
<dbReference type="InterPro" id="IPR037237">
    <property type="entry name" value="IlvD/EDD_N"/>
</dbReference>
<dbReference type="NCBIfam" id="TIGR00110">
    <property type="entry name" value="ilvD"/>
    <property type="match status" value="1"/>
</dbReference>
<dbReference type="NCBIfam" id="NF009103">
    <property type="entry name" value="PRK12448.1"/>
    <property type="match status" value="1"/>
</dbReference>
<dbReference type="PANTHER" id="PTHR43661">
    <property type="entry name" value="D-XYLONATE DEHYDRATASE"/>
    <property type="match status" value="1"/>
</dbReference>
<dbReference type="PANTHER" id="PTHR43661:SF3">
    <property type="entry name" value="D-XYLONATE DEHYDRATASE YAGF-RELATED"/>
    <property type="match status" value="1"/>
</dbReference>
<dbReference type="Pfam" id="PF24877">
    <property type="entry name" value="ILV_EDD_C"/>
    <property type="match status" value="1"/>
</dbReference>
<dbReference type="Pfam" id="PF00920">
    <property type="entry name" value="ILVD_EDD_N"/>
    <property type="match status" value="1"/>
</dbReference>
<dbReference type="SUPFAM" id="SSF143975">
    <property type="entry name" value="IlvD/EDD N-terminal domain-like"/>
    <property type="match status" value="1"/>
</dbReference>
<dbReference type="SUPFAM" id="SSF52016">
    <property type="entry name" value="LeuD/IlvD-like"/>
    <property type="match status" value="1"/>
</dbReference>
<dbReference type="PROSITE" id="PS00886">
    <property type="entry name" value="ILVD_EDD_1"/>
    <property type="match status" value="1"/>
</dbReference>
<dbReference type="PROSITE" id="PS00887">
    <property type="entry name" value="ILVD_EDD_2"/>
    <property type="match status" value="1"/>
</dbReference>
<sequence length="616" mass="65730">MPKYRSATTTHGRNMAGARALWRATGMTDSDFGKPIIAVVNSFTQFVPGHVHLRDLGKLVAEQIEASGGVAKEFNTIAVDDGIAMGHGGMLYSLPSRELIADSVEYMVNAHCADAMVCISNCDKITPGMLMASLRLNIPVIFVSGGPMEAGKTKLSDQIIKLDLVDAMIQGADPKVSDDQSNQVERSACPTCGSCSGMFTANSMNCLTEALGLSQPGNGSLLATHADRKQLFLNAGKRIVELTKRYYEQDDESALPRNIANKAAFENAMTLDIAMGGSTNTVLHLLAAAQEAEIDFTMSDIDKLSRKVPQLCKVAPSTQKYHMEDVHRAGGVLGILGELDRAGLLNRNVKNVLGLTLPQTLEQYDITVTQDEAVKKMFRAGPAGIRTTQAFSQDCRWDSLDDDRAAGCIRSLEYAYSKDGGLAVLYGNFAENGCIVKTAGVDDSILKFTGPAKVYESQDDAVEAILGGKVVEGDVVVIRYEGPKGGPGMQEMLYPTSFLKSMGLGKACALITDGRFSGGTSGLSIGHVSPEAASGGTIALIEDGDTIAIDIPNRSIQLQLSEAEIAARREAQEARGDKAWTPKNRQRQVSFALRAYASLATSADKGAVRDKSKLGG</sequence>
<evidence type="ECO:0000255" key="1">
    <source>
        <dbReference type="HAMAP-Rule" id="MF_00012"/>
    </source>
</evidence>
<accession>B5BIR7</accession>
<organism>
    <name type="scientific">Salmonella paratyphi A (strain AKU_12601)</name>
    <dbReference type="NCBI Taxonomy" id="554290"/>
    <lineage>
        <taxon>Bacteria</taxon>
        <taxon>Pseudomonadati</taxon>
        <taxon>Pseudomonadota</taxon>
        <taxon>Gammaproteobacteria</taxon>
        <taxon>Enterobacterales</taxon>
        <taxon>Enterobacteriaceae</taxon>
        <taxon>Salmonella</taxon>
    </lineage>
</organism>
<reference key="1">
    <citation type="journal article" date="2009" name="BMC Genomics">
        <title>Pseudogene accumulation in the evolutionary histories of Salmonella enterica serovars Paratyphi A and Typhi.</title>
        <authorList>
            <person name="Holt K.E."/>
            <person name="Thomson N.R."/>
            <person name="Wain J."/>
            <person name="Langridge G.C."/>
            <person name="Hasan R."/>
            <person name="Bhutta Z.A."/>
            <person name="Quail M.A."/>
            <person name="Norbertczak H."/>
            <person name="Walker D."/>
            <person name="Simmonds M."/>
            <person name="White B."/>
            <person name="Bason N."/>
            <person name="Mungall K."/>
            <person name="Dougan G."/>
            <person name="Parkhill J."/>
        </authorList>
    </citation>
    <scope>NUCLEOTIDE SEQUENCE [LARGE SCALE GENOMIC DNA]</scope>
    <source>
        <strain>AKU_12601</strain>
    </source>
</reference>
<protein>
    <recommendedName>
        <fullName evidence="1">Dihydroxy-acid dehydratase</fullName>
        <shortName evidence="1">DAD</shortName>
        <ecNumber evidence="1">4.2.1.9</ecNumber>
    </recommendedName>
</protein>
<comment type="function">
    <text evidence="1">Functions in the biosynthesis of branched-chain amino acids. Catalyzes the dehydration of (2R,3R)-2,3-dihydroxy-3-methylpentanoate (2,3-dihydroxy-3-methylvalerate) into 2-oxo-3-methylpentanoate (2-oxo-3-methylvalerate) and of (2R)-2,3-dihydroxy-3-methylbutanoate (2,3-dihydroxyisovalerate) into 2-oxo-3-methylbutanoate (2-oxoisovalerate), the penultimate precursor to L-isoleucine and L-valine, respectively.</text>
</comment>
<comment type="catalytic activity">
    <reaction evidence="1">
        <text>(2R)-2,3-dihydroxy-3-methylbutanoate = 3-methyl-2-oxobutanoate + H2O</text>
        <dbReference type="Rhea" id="RHEA:24809"/>
        <dbReference type="ChEBI" id="CHEBI:11851"/>
        <dbReference type="ChEBI" id="CHEBI:15377"/>
        <dbReference type="ChEBI" id="CHEBI:49072"/>
        <dbReference type="EC" id="4.2.1.9"/>
    </reaction>
    <physiologicalReaction direction="left-to-right" evidence="1">
        <dbReference type="Rhea" id="RHEA:24810"/>
    </physiologicalReaction>
</comment>
<comment type="catalytic activity">
    <reaction evidence="1">
        <text>(2R,3R)-2,3-dihydroxy-3-methylpentanoate = (S)-3-methyl-2-oxopentanoate + H2O</text>
        <dbReference type="Rhea" id="RHEA:27694"/>
        <dbReference type="ChEBI" id="CHEBI:15377"/>
        <dbReference type="ChEBI" id="CHEBI:35146"/>
        <dbReference type="ChEBI" id="CHEBI:49258"/>
        <dbReference type="EC" id="4.2.1.9"/>
    </reaction>
    <physiologicalReaction direction="left-to-right" evidence="1">
        <dbReference type="Rhea" id="RHEA:27695"/>
    </physiologicalReaction>
</comment>
<comment type="cofactor">
    <cofactor evidence="1">
        <name>[2Fe-2S] cluster</name>
        <dbReference type="ChEBI" id="CHEBI:190135"/>
    </cofactor>
    <text evidence="1">Binds 1 [2Fe-2S] cluster per subunit. This cluster acts as a Lewis acid cofactor.</text>
</comment>
<comment type="cofactor">
    <cofactor evidence="1">
        <name>Mg(2+)</name>
        <dbReference type="ChEBI" id="CHEBI:18420"/>
    </cofactor>
</comment>
<comment type="pathway">
    <text evidence="1">Amino-acid biosynthesis; L-isoleucine biosynthesis; L-isoleucine from 2-oxobutanoate: step 3/4.</text>
</comment>
<comment type="pathway">
    <text evidence="1">Amino-acid biosynthesis; L-valine biosynthesis; L-valine from pyruvate: step 3/4.</text>
</comment>
<comment type="subunit">
    <text evidence="1">Homodimer.</text>
</comment>
<comment type="similarity">
    <text evidence="1">Belongs to the IlvD/Edd family.</text>
</comment>